<organism>
    <name type="scientific">Schizosaccharomyces pombe (strain 972 / ATCC 24843)</name>
    <name type="common">Fission yeast</name>
    <dbReference type="NCBI Taxonomy" id="284812"/>
    <lineage>
        <taxon>Eukaryota</taxon>
        <taxon>Fungi</taxon>
        <taxon>Dikarya</taxon>
        <taxon>Ascomycota</taxon>
        <taxon>Taphrinomycotina</taxon>
        <taxon>Schizosaccharomycetes</taxon>
        <taxon>Schizosaccharomycetales</taxon>
        <taxon>Schizosaccharomycetaceae</taxon>
        <taxon>Schizosaccharomyces</taxon>
    </lineage>
</organism>
<proteinExistence type="evidence at transcript level"/>
<protein>
    <recommendedName>
        <fullName>mRNA stability protein mug134</fullName>
    </recommendedName>
    <alternativeName>
        <fullName>Initiation of G zero protein 1</fullName>
    </alternativeName>
</protein>
<evidence type="ECO:0000256" key="1">
    <source>
        <dbReference type="SAM" id="MobiDB-lite"/>
    </source>
</evidence>
<evidence type="ECO:0000269" key="2">
    <source>
    </source>
</evidence>
<evidence type="ECO:0000269" key="3">
    <source>
    </source>
</evidence>
<evidence type="ECO:0000305" key="4"/>
<keyword id="KW-0963">Cytoplasm</keyword>
<keyword id="KW-0539">Nucleus</keyword>
<keyword id="KW-1185">Reference proteome</keyword>
<comment type="function">
    <text>Plays an essential role in initiation of the G0 program by preventing the degradation of specific nutrient-regulated mRNAs via the 5'-3' mRNA decay pathway.</text>
</comment>
<comment type="subcellular location">
    <subcellularLocation>
        <location evidence="3">Nucleus</location>
    </subcellularLocation>
    <subcellularLocation>
        <location evidence="3">Cytoplasm</location>
    </subcellularLocation>
</comment>
<comment type="induction">
    <text evidence="2">Expressed during meiosis.</text>
</comment>
<comment type="similarity">
    <text evidence="4">Belongs to the endosulfine family.</text>
</comment>
<sequence>MVRTRKWMLSTTIIAMSSSNSEQKVDVAKLSPEEQKLFRLYGRLPQRKDLLVQKLQQGRKYFDSGDYALNKAGKASDSGITCIGKEIPSPDTIPHRVVSAGSPNKEPSLHTKRPSESSPSGASSRRESVTRHDLESNEN</sequence>
<gene>
    <name type="primary">mug134</name>
    <name type="synonym">igo1</name>
    <name type="ORF">SPAC10F6.16</name>
</gene>
<dbReference type="EMBL" id="CU329670">
    <property type="protein sequence ID" value="CAA15729.1"/>
    <property type="molecule type" value="Genomic_DNA"/>
</dbReference>
<dbReference type="EMBL" id="AB001289">
    <property type="protein sequence ID" value="BAA19234.1"/>
    <property type="molecule type" value="mRNA"/>
</dbReference>
<dbReference type="PIR" id="T37510">
    <property type="entry name" value="T37510"/>
</dbReference>
<dbReference type="RefSeq" id="NP_593267.1">
    <property type="nucleotide sequence ID" value="NM_001018664.2"/>
</dbReference>
<dbReference type="SMR" id="P79058"/>
<dbReference type="BioGRID" id="279401">
    <property type="interactions" value="16"/>
</dbReference>
<dbReference type="FunCoup" id="P79058">
    <property type="interactions" value="476"/>
</dbReference>
<dbReference type="STRING" id="284812.P79058"/>
<dbReference type="iPTMnet" id="P79058"/>
<dbReference type="PaxDb" id="4896-SPAC10F6.16.1"/>
<dbReference type="EnsemblFungi" id="SPAC10F6.16.1">
    <property type="protein sequence ID" value="SPAC10F6.16.1:pep"/>
    <property type="gene ID" value="SPAC10F6.16"/>
</dbReference>
<dbReference type="GeneID" id="2542961"/>
<dbReference type="KEGG" id="spo:2542961"/>
<dbReference type="PomBase" id="SPAC10F6.16">
    <property type="gene designation" value="mug134"/>
</dbReference>
<dbReference type="VEuPathDB" id="FungiDB:SPAC10F6.16"/>
<dbReference type="eggNOG" id="KOG4076">
    <property type="taxonomic scope" value="Eukaryota"/>
</dbReference>
<dbReference type="HOGENOM" id="CLU_101493_1_0_1"/>
<dbReference type="InParanoid" id="P79058"/>
<dbReference type="OMA" id="LQQGRKY"/>
<dbReference type="PhylomeDB" id="P79058"/>
<dbReference type="Reactome" id="R-SPO-2465910">
    <property type="pathway name" value="MASTL Facilitates Mitotic Progression"/>
</dbReference>
<dbReference type="PRO" id="PR:P79058"/>
<dbReference type="Proteomes" id="UP000002485">
    <property type="component" value="Chromosome I"/>
</dbReference>
<dbReference type="GO" id="GO:0005737">
    <property type="term" value="C:cytoplasm"/>
    <property type="evidence" value="ECO:0000318"/>
    <property type="project" value="GO_Central"/>
</dbReference>
<dbReference type="GO" id="GO:0005829">
    <property type="term" value="C:cytosol"/>
    <property type="evidence" value="ECO:0007005"/>
    <property type="project" value="PomBase"/>
</dbReference>
<dbReference type="GO" id="GO:0005634">
    <property type="term" value="C:nucleus"/>
    <property type="evidence" value="ECO:0007005"/>
    <property type="project" value="PomBase"/>
</dbReference>
<dbReference type="GO" id="GO:0004864">
    <property type="term" value="F:protein phosphatase inhibitor activity"/>
    <property type="evidence" value="ECO:0000318"/>
    <property type="project" value="GO_Central"/>
</dbReference>
<dbReference type="GO" id="GO:0004865">
    <property type="term" value="F:protein serine/threonine phosphatase inhibitor activity"/>
    <property type="evidence" value="ECO:0000314"/>
    <property type="project" value="PomBase"/>
</dbReference>
<dbReference type="GO" id="GO:0035556">
    <property type="term" value="P:intracellular signal transduction"/>
    <property type="evidence" value="ECO:0000315"/>
    <property type="project" value="PomBase"/>
</dbReference>
<dbReference type="GO" id="GO:1905287">
    <property type="term" value="P:positive regulation of G2/M transition of mitotic cell cycle involved in cellular response to nitrogen starvation"/>
    <property type="evidence" value="ECO:0000315"/>
    <property type="project" value="PomBase"/>
</dbReference>
<dbReference type="GO" id="GO:1900237">
    <property type="term" value="P:positive regulation of induction of conjugation with cellular fusion"/>
    <property type="evidence" value="ECO:0000316"/>
    <property type="project" value="PomBase"/>
</dbReference>
<dbReference type="GO" id="GO:1902472">
    <property type="term" value="P:regulation of mitotic cytokinesis, division site positioning"/>
    <property type="evidence" value="ECO:0000316"/>
    <property type="project" value="PomBase"/>
</dbReference>
<dbReference type="InterPro" id="IPR006760">
    <property type="entry name" value="Endosulphine"/>
</dbReference>
<dbReference type="PANTHER" id="PTHR10358">
    <property type="entry name" value="ENDOSULFINE"/>
    <property type="match status" value="1"/>
</dbReference>
<dbReference type="PANTHER" id="PTHR10358:SF6">
    <property type="entry name" value="ENDOSULFINE, ISOFORM A"/>
    <property type="match status" value="1"/>
</dbReference>
<dbReference type="Pfam" id="PF04667">
    <property type="entry name" value="Endosulfine"/>
    <property type="match status" value="1"/>
</dbReference>
<reference key="1">
    <citation type="journal article" date="2002" name="Nature">
        <title>The genome sequence of Schizosaccharomyces pombe.</title>
        <authorList>
            <person name="Wood V."/>
            <person name="Gwilliam R."/>
            <person name="Rajandream M.A."/>
            <person name="Lyne M.H."/>
            <person name="Lyne R."/>
            <person name="Stewart A."/>
            <person name="Sgouros J.G."/>
            <person name="Peat N."/>
            <person name="Hayles J."/>
            <person name="Baker S.G."/>
            <person name="Basham D."/>
            <person name="Bowman S."/>
            <person name="Brooks K."/>
            <person name="Brown D."/>
            <person name="Brown S."/>
            <person name="Chillingworth T."/>
            <person name="Churcher C.M."/>
            <person name="Collins M."/>
            <person name="Connor R."/>
            <person name="Cronin A."/>
            <person name="Davis P."/>
            <person name="Feltwell T."/>
            <person name="Fraser A."/>
            <person name="Gentles S."/>
            <person name="Goble A."/>
            <person name="Hamlin N."/>
            <person name="Harris D.E."/>
            <person name="Hidalgo J."/>
            <person name="Hodgson G."/>
            <person name="Holroyd S."/>
            <person name="Hornsby T."/>
            <person name="Howarth S."/>
            <person name="Huckle E.J."/>
            <person name="Hunt S."/>
            <person name="Jagels K."/>
            <person name="James K.D."/>
            <person name="Jones L."/>
            <person name="Jones M."/>
            <person name="Leather S."/>
            <person name="McDonald S."/>
            <person name="McLean J."/>
            <person name="Mooney P."/>
            <person name="Moule S."/>
            <person name="Mungall K.L."/>
            <person name="Murphy L.D."/>
            <person name="Niblett D."/>
            <person name="Odell C."/>
            <person name="Oliver K."/>
            <person name="O'Neil S."/>
            <person name="Pearson D."/>
            <person name="Quail M.A."/>
            <person name="Rabbinowitsch E."/>
            <person name="Rutherford K.M."/>
            <person name="Rutter S."/>
            <person name="Saunders D."/>
            <person name="Seeger K."/>
            <person name="Sharp S."/>
            <person name="Skelton J."/>
            <person name="Simmonds M.N."/>
            <person name="Squares R."/>
            <person name="Squares S."/>
            <person name="Stevens K."/>
            <person name="Taylor K."/>
            <person name="Taylor R.G."/>
            <person name="Tivey A."/>
            <person name="Walsh S.V."/>
            <person name="Warren T."/>
            <person name="Whitehead S."/>
            <person name="Woodward J.R."/>
            <person name="Volckaert G."/>
            <person name="Aert R."/>
            <person name="Robben J."/>
            <person name="Grymonprez B."/>
            <person name="Weltjens I."/>
            <person name="Vanstreels E."/>
            <person name="Rieger M."/>
            <person name="Schaefer M."/>
            <person name="Mueller-Auer S."/>
            <person name="Gabel C."/>
            <person name="Fuchs M."/>
            <person name="Duesterhoeft A."/>
            <person name="Fritzc C."/>
            <person name="Holzer E."/>
            <person name="Moestl D."/>
            <person name="Hilbert H."/>
            <person name="Borzym K."/>
            <person name="Langer I."/>
            <person name="Beck A."/>
            <person name="Lehrach H."/>
            <person name="Reinhardt R."/>
            <person name="Pohl T.M."/>
            <person name="Eger P."/>
            <person name="Zimmermann W."/>
            <person name="Wedler H."/>
            <person name="Wambutt R."/>
            <person name="Purnelle B."/>
            <person name="Goffeau A."/>
            <person name="Cadieu E."/>
            <person name="Dreano S."/>
            <person name="Gloux S."/>
            <person name="Lelaure V."/>
            <person name="Mottier S."/>
            <person name="Galibert F."/>
            <person name="Aves S.J."/>
            <person name="Xiang Z."/>
            <person name="Hunt C."/>
            <person name="Moore K."/>
            <person name="Hurst S.M."/>
            <person name="Lucas M."/>
            <person name="Rochet M."/>
            <person name="Gaillardin C."/>
            <person name="Tallada V.A."/>
            <person name="Garzon A."/>
            <person name="Thode G."/>
            <person name="Daga R.R."/>
            <person name="Cruzado L."/>
            <person name="Jimenez J."/>
            <person name="Sanchez M."/>
            <person name="del Rey F."/>
            <person name="Benito J."/>
            <person name="Dominguez A."/>
            <person name="Revuelta J.L."/>
            <person name="Moreno S."/>
            <person name="Armstrong J."/>
            <person name="Forsburg S.L."/>
            <person name="Cerutti L."/>
            <person name="Lowe T."/>
            <person name="McCombie W.R."/>
            <person name="Paulsen I."/>
            <person name="Potashkin J."/>
            <person name="Shpakovski G.V."/>
            <person name="Ussery D."/>
            <person name="Barrell B.G."/>
            <person name="Nurse P."/>
        </authorList>
    </citation>
    <scope>NUCLEOTIDE SEQUENCE [LARGE SCALE GENOMIC DNA]</scope>
    <source>
        <strain>972 / ATCC 24843</strain>
    </source>
</reference>
<reference key="2">
    <citation type="submission" date="1997-02" db="EMBL/GenBank/DDBJ databases">
        <title>S.pombe cDNA YNL157w homolog.</title>
        <authorList>
            <person name="Kawamukai M."/>
        </authorList>
    </citation>
    <scope>NUCLEOTIDE SEQUENCE [MRNA] OF 20-139</scope>
</reference>
<reference key="3">
    <citation type="journal article" date="2005" name="Curr. Biol.">
        <title>A large-scale screen in S. pombe identifies seven novel genes required for critical meiotic events.</title>
        <authorList>
            <person name="Martin-Castellanos C."/>
            <person name="Blanco M."/>
            <person name="Rozalen A.E."/>
            <person name="Perez-Hidalgo L."/>
            <person name="Garcia A.I."/>
            <person name="Conde F."/>
            <person name="Mata J."/>
            <person name="Ellermeier C."/>
            <person name="Davis L."/>
            <person name="San-Segundo P."/>
            <person name="Smith G.R."/>
            <person name="Moreno S."/>
        </authorList>
    </citation>
    <scope>INDUCTION</scope>
</reference>
<reference key="4">
    <citation type="journal article" date="2006" name="Nat. Biotechnol.">
        <title>ORFeome cloning and global analysis of protein localization in the fission yeast Schizosaccharomyces pombe.</title>
        <authorList>
            <person name="Matsuyama A."/>
            <person name="Arai R."/>
            <person name="Yashiroda Y."/>
            <person name="Shirai A."/>
            <person name="Kamata A."/>
            <person name="Sekido S."/>
            <person name="Kobayashi Y."/>
            <person name="Hashimoto A."/>
            <person name="Hamamoto M."/>
            <person name="Hiraoka Y."/>
            <person name="Horinouchi S."/>
            <person name="Yoshida M."/>
        </authorList>
    </citation>
    <scope>SUBCELLULAR LOCATION [LARGE SCALE ANALYSIS]</scope>
</reference>
<feature type="chain" id="PRO_0000116735" description="mRNA stability protein mug134">
    <location>
        <begin position="1"/>
        <end position="139"/>
    </location>
</feature>
<feature type="region of interest" description="Disordered" evidence="1">
    <location>
        <begin position="83"/>
        <end position="139"/>
    </location>
</feature>
<feature type="compositionally biased region" description="Basic and acidic residues" evidence="1">
    <location>
        <begin position="124"/>
        <end position="139"/>
    </location>
</feature>
<name>IGO1_SCHPO</name>
<accession>P79058</accession>